<reference key="1">
    <citation type="journal article" date="2005" name="J. Bacteriol.">
        <title>Genomic sequence of an otitis media isolate of nontypeable Haemophilus influenzae: comparative study with H. influenzae serotype d, strain KW20.</title>
        <authorList>
            <person name="Harrison A."/>
            <person name="Dyer D.W."/>
            <person name="Gillaspy A."/>
            <person name="Ray W.C."/>
            <person name="Mungur R."/>
            <person name="Carson M.B."/>
            <person name="Zhong H."/>
            <person name="Gipson J."/>
            <person name="Gipson M."/>
            <person name="Johnson L.S."/>
            <person name="Lewis L."/>
            <person name="Bakaletz L.O."/>
            <person name="Munson R.S. Jr."/>
        </authorList>
    </citation>
    <scope>NUCLEOTIDE SEQUENCE [LARGE SCALE GENOMIC DNA]</scope>
    <source>
        <strain>86-028NP</strain>
    </source>
</reference>
<evidence type="ECO:0000255" key="1">
    <source>
        <dbReference type="HAMAP-Rule" id="MF_01616"/>
    </source>
</evidence>
<organism>
    <name type="scientific">Haemophilus influenzae (strain 86-028NP)</name>
    <dbReference type="NCBI Taxonomy" id="281310"/>
    <lineage>
        <taxon>Bacteria</taxon>
        <taxon>Pseudomonadati</taxon>
        <taxon>Pseudomonadota</taxon>
        <taxon>Gammaproteobacteria</taxon>
        <taxon>Pasteurellales</taxon>
        <taxon>Pasteurellaceae</taxon>
        <taxon>Haemophilus</taxon>
    </lineage>
</organism>
<dbReference type="EC" id="4.2.2.n1" evidence="1"/>
<dbReference type="EMBL" id="CP000057">
    <property type="protein sequence ID" value="AAX87809.1"/>
    <property type="molecule type" value="Genomic_DNA"/>
</dbReference>
<dbReference type="RefSeq" id="WP_011272209.1">
    <property type="nucleotide sequence ID" value="NC_007146.2"/>
</dbReference>
<dbReference type="SMR" id="Q4QMD8"/>
<dbReference type="CAZy" id="GH23">
    <property type="family name" value="Glycoside Hydrolase Family 23"/>
</dbReference>
<dbReference type="KEGG" id="hit:NTHI0921"/>
<dbReference type="HOGENOM" id="CLU_044583_0_0_6"/>
<dbReference type="Proteomes" id="UP000002525">
    <property type="component" value="Chromosome"/>
</dbReference>
<dbReference type="GO" id="GO:0009279">
    <property type="term" value="C:cell outer membrane"/>
    <property type="evidence" value="ECO:0007669"/>
    <property type="project" value="UniProtKB-SubCell"/>
</dbReference>
<dbReference type="GO" id="GO:0016798">
    <property type="term" value="F:hydrolase activity, acting on glycosyl bonds"/>
    <property type="evidence" value="ECO:0007669"/>
    <property type="project" value="InterPro"/>
</dbReference>
<dbReference type="GO" id="GO:0008933">
    <property type="term" value="F:peptidoglycan lytic transglycosylase activity"/>
    <property type="evidence" value="ECO:0007669"/>
    <property type="project" value="UniProtKB-UniRule"/>
</dbReference>
<dbReference type="GO" id="GO:0016998">
    <property type="term" value="P:cell wall macromolecule catabolic process"/>
    <property type="evidence" value="ECO:0007669"/>
    <property type="project" value="UniProtKB-UniRule"/>
</dbReference>
<dbReference type="GO" id="GO:0071555">
    <property type="term" value="P:cell wall organization"/>
    <property type="evidence" value="ECO:0007669"/>
    <property type="project" value="UniProtKB-KW"/>
</dbReference>
<dbReference type="GO" id="GO:0000270">
    <property type="term" value="P:peptidoglycan metabolic process"/>
    <property type="evidence" value="ECO:0007669"/>
    <property type="project" value="InterPro"/>
</dbReference>
<dbReference type="CDD" id="cd16893">
    <property type="entry name" value="LT_MltC_MltE"/>
    <property type="match status" value="1"/>
</dbReference>
<dbReference type="Gene3D" id="1.10.530.10">
    <property type="match status" value="1"/>
</dbReference>
<dbReference type="HAMAP" id="MF_01616">
    <property type="entry name" value="MltC"/>
    <property type="match status" value="1"/>
</dbReference>
<dbReference type="InterPro" id="IPR023346">
    <property type="entry name" value="Lysozyme-like_dom_sf"/>
</dbReference>
<dbReference type="InterPro" id="IPR023664">
    <property type="entry name" value="Murein_transglycosylaseC"/>
</dbReference>
<dbReference type="InterPro" id="IPR024570">
    <property type="entry name" value="Murein_transglycosylaseC_N"/>
</dbReference>
<dbReference type="InterPro" id="IPR000189">
    <property type="entry name" value="Transglyc_AS"/>
</dbReference>
<dbReference type="InterPro" id="IPR008258">
    <property type="entry name" value="Transglycosylase_SLT_dom_1"/>
</dbReference>
<dbReference type="NCBIfam" id="NF008670">
    <property type="entry name" value="PRK11671.1"/>
    <property type="match status" value="1"/>
</dbReference>
<dbReference type="PANTHER" id="PTHR37423:SF2">
    <property type="entry name" value="MEMBRANE-BOUND LYTIC MUREIN TRANSGLYCOSYLASE C"/>
    <property type="match status" value="1"/>
</dbReference>
<dbReference type="PANTHER" id="PTHR37423">
    <property type="entry name" value="SOLUBLE LYTIC MUREIN TRANSGLYCOSYLASE-RELATED"/>
    <property type="match status" value="1"/>
</dbReference>
<dbReference type="Pfam" id="PF11873">
    <property type="entry name" value="Mltc_N"/>
    <property type="match status" value="1"/>
</dbReference>
<dbReference type="Pfam" id="PF01464">
    <property type="entry name" value="SLT"/>
    <property type="match status" value="1"/>
</dbReference>
<dbReference type="SUPFAM" id="SSF53955">
    <property type="entry name" value="Lysozyme-like"/>
    <property type="match status" value="1"/>
</dbReference>
<dbReference type="PROSITE" id="PS51257">
    <property type="entry name" value="PROKAR_LIPOPROTEIN"/>
    <property type="match status" value="1"/>
</dbReference>
<dbReference type="PROSITE" id="PS00922">
    <property type="entry name" value="TRANSGLYCOSYLASE"/>
    <property type="match status" value="1"/>
</dbReference>
<name>MLTC_HAEI8</name>
<proteinExistence type="inferred from homology"/>
<keyword id="KW-0998">Cell outer membrane</keyword>
<keyword id="KW-0961">Cell wall biogenesis/degradation</keyword>
<keyword id="KW-0449">Lipoprotein</keyword>
<keyword id="KW-0456">Lyase</keyword>
<keyword id="KW-0472">Membrane</keyword>
<keyword id="KW-0564">Palmitate</keyword>
<keyword id="KW-0732">Signal</keyword>
<sequence length="357" mass="40228">MKKYLLLALLPFLYACSNSSNQGINYDEAFAKDTQGLDILTGQFSHNIDRIWGVNELLVASRKDYVKYTDSFYTRSHVSFDEGNIVIETQQDLNRLHNAIVHTLLMGADAKGIDLFTSGDVPISSRPFLLGQVVDHQGQQIANQVIASNFATYLIQNKLQTRRLQNGHTVQFVSVPMIANHVEVRARKYLPLIRKAAQRYGIDESLILGIMQTESSFNPYAISYANAIGLMQVVPHTAGRDVFAMKGKGGQPSTRYLYDPANNIDAGVSYLWILQNQYLDGITNPTSKRFAMISAYNSGAGAVLRVFDNDKDTAIYKINQMYPEQVYRILTTVHPSSQARNYLLKVDKAQKKFRVRR</sequence>
<comment type="function">
    <text evidence="1">Murein-degrading enzyme. May play a role in recycling of muropeptides during cell elongation and/or cell division.</text>
</comment>
<comment type="catalytic activity">
    <reaction evidence="1">
        <text>Exolytic cleavage of the (1-&gt;4)-beta-glycosidic linkage between N-acetylmuramic acid (MurNAc) and N-acetylglucosamine (GlcNAc) residues in peptidoglycan, from either the reducing or the non-reducing ends of the peptidoglycan chains, with concomitant formation of a 1,6-anhydrobond in the MurNAc residue.</text>
        <dbReference type="EC" id="4.2.2.n1"/>
    </reaction>
</comment>
<comment type="subcellular location">
    <subcellularLocation>
        <location evidence="1">Cell outer membrane</location>
        <topology evidence="1">Lipid-anchor</topology>
    </subcellularLocation>
</comment>
<comment type="similarity">
    <text evidence="1">Belongs to the transglycosylase Slt family.</text>
</comment>
<feature type="signal peptide" evidence="1">
    <location>
        <begin position="1"/>
        <end position="15"/>
    </location>
</feature>
<feature type="chain" id="PRO_1000069475" description="Membrane-bound lytic murein transglycosylase C">
    <location>
        <begin position="16"/>
        <end position="357"/>
    </location>
</feature>
<feature type="lipid moiety-binding region" description="N-palmitoyl cysteine" evidence="1">
    <location>
        <position position="16"/>
    </location>
</feature>
<feature type="lipid moiety-binding region" description="S-diacylglycerol cysteine" evidence="1">
    <location>
        <position position="16"/>
    </location>
</feature>
<accession>Q4QMD8</accession>
<protein>
    <recommendedName>
        <fullName evidence="1">Membrane-bound lytic murein transglycosylase C</fullName>
        <ecNumber evidence="1">4.2.2.n1</ecNumber>
    </recommendedName>
    <alternativeName>
        <fullName evidence="1">Murein lyase C</fullName>
    </alternativeName>
</protein>
<gene>
    <name evidence="1" type="primary">mltC</name>
    <name type="ordered locus">NTHI0921</name>
</gene>